<name>O3627_CONAE</name>
<evidence type="ECO:0000250" key="1"/>
<evidence type="ECO:0000255" key="2"/>
<evidence type="ECO:0000305" key="3"/>
<feature type="signal peptide" evidence="2">
    <location>
        <begin position="1"/>
        <end position="18"/>
    </location>
</feature>
<feature type="propeptide" id="PRO_0000404858" evidence="1">
    <location>
        <begin position="19"/>
        <end position="44"/>
    </location>
</feature>
<feature type="peptide" id="PRO_0000404859" description="Conotoxin ArMSGL-0141">
    <location>
        <begin position="47"/>
        <end position="76"/>
    </location>
</feature>
<feature type="modified residue" description="Phenylalanine amide" evidence="1">
    <location>
        <position position="76"/>
    </location>
</feature>
<feature type="disulfide bond" evidence="1">
    <location>
        <begin position="51"/>
        <end position="63"/>
    </location>
</feature>
<feature type="disulfide bond" evidence="1">
    <location>
        <begin position="55"/>
        <end position="71"/>
    </location>
</feature>
<feature type="disulfide bond" evidence="1">
    <location>
        <begin position="62"/>
        <end position="75"/>
    </location>
</feature>
<comment type="subcellular location">
    <subcellularLocation>
        <location evidence="1">Secreted</location>
    </subcellularLocation>
</comment>
<comment type="tissue specificity">
    <text>Expressed by the venom duct.</text>
</comment>
<comment type="domain">
    <text evidence="1">The presence of a 'disulfide through disulfide knot' structurally defines this protein as a knottin.</text>
</comment>
<comment type="domain">
    <text>The cysteine framework is VI/VII (C-C-CC-C-C).</text>
</comment>
<comment type="similarity">
    <text evidence="3">Belongs to the conotoxin O3 superfamily.</text>
</comment>
<sequence length="77" mass="8556">MSGLGILVLTLLLLVYMATSHQDAGEKQATQRDAINVRRRRSLTRRVAEECEESCEDEEKHCCNTNNGPSCAPQCFG</sequence>
<accession>Q9BP68</accession>
<protein>
    <recommendedName>
        <fullName>Conotoxin ArMSGL-0141</fullName>
    </recommendedName>
</protein>
<keyword id="KW-0027">Amidation</keyword>
<keyword id="KW-0165">Cleavage on pair of basic residues</keyword>
<keyword id="KW-1015">Disulfide bond</keyword>
<keyword id="KW-0960">Knottin</keyword>
<keyword id="KW-0528">Neurotoxin</keyword>
<keyword id="KW-0964">Secreted</keyword>
<keyword id="KW-0732">Signal</keyword>
<keyword id="KW-0800">Toxin</keyword>
<reference key="1">
    <citation type="journal article" date="2001" name="Mol. Biol. Evol.">
        <title>Mechanisms for evolving hypervariability: the case of conopeptides.</title>
        <authorList>
            <person name="Conticello S.G."/>
            <person name="Gilad Y."/>
            <person name="Avidan N."/>
            <person name="Ben-Asher E."/>
            <person name="Levy Z."/>
            <person name="Fainzilber M."/>
        </authorList>
    </citation>
    <scope>NUCLEOTIDE SEQUENCE [MRNA]</scope>
    <source>
        <tissue>Venom duct</tissue>
    </source>
</reference>
<organism>
    <name type="scientific">Conus arenatus</name>
    <name type="common">Sand-dusted cone</name>
    <dbReference type="NCBI Taxonomy" id="89451"/>
    <lineage>
        <taxon>Eukaryota</taxon>
        <taxon>Metazoa</taxon>
        <taxon>Spiralia</taxon>
        <taxon>Lophotrochozoa</taxon>
        <taxon>Mollusca</taxon>
        <taxon>Gastropoda</taxon>
        <taxon>Caenogastropoda</taxon>
        <taxon>Neogastropoda</taxon>
        <taxon>Conoidea</taxon>
        <taxon>Conidae</taxon>
        <taxon>Conus</taxon>
    </lineage>
</organism>
<proteinExistence type="evidence at transcript level"/>
<dbReference type="EMBL" id="AF215070">
    <property type="protein sequence ID" value="AAG60498.1"/>
    <property type="molecule type" value="mRNA"/>
</dbReference>
<dbReference type="SMR" id="Q9BP68"/>
<dbReference type="ConoServer" id="757">
    <property type="toxin name" value="Ar6.27 precursor"/>
</dbReference>
<dbReference type="GO" id="GO:0005576">
    <property type="term" value="C:extracellular region"/>
    <property type="evidence" value="ECO:0007669"/>
    <property type="project" value="UniProtKB-SubCell"/>
</dbReference>
<dbReference type="GO" id="GO:0008200">
    <property type="term" value="F:ion channel inhibitor activity"/>
    <property type="evidence" value="ECO:0007669"/>
    <property type="project" value="InterPro"/>
</dbReference>
<dbReference type="GO" id="GO:0090729">
    <property type="term" value="F:toxin activity"/>
    <property type="evidence" value="ECO:0007669"/>
    <property type="project" value="UniProtKB-KW"/>
</dbReference>
<dbReference type="InterPro" id="IPR004214">
    <property type="entry name" value="Conotoxin"/>
</dbReference>
<dbReference type="Pfam" id="PF02950">
    <property type="entry name" value="Conotoxin"/>
    <property type="match status" value="1"/>
</dbReference>